<sequence>MVSNIDHKAMEALLRGQGCANNLKILLENGEISSVSTEPLIHTILDSFSLALSFMDSPNHPPYHESSSHNMASHMSRRSSKQVQHRRKLCVAEGLVNYNHDSRTMCPNDGFTWRKYGQKTIKASAHKRCYYRCTYAKDQNCNATKRVQKIKDNPPVYRTTYLGKHVCKAFAVHDDTYSSTMIRFDQVVPEPIMPQLTTIDHQVITVEENSAEHIMNQECDINDYLVDDDPFWASQFPPFPSSDTMFLENISAFD</sequence>
<keyword id="KW-0025">Alternative splicing</keyword>
<keyword id="KW-0238">DNA-binding</keyword>
<keyword id="KW-0539">Nucleus</keyword>
<keyword id="KW-1185">Reference proteome</keyword>
<keyword id="KW-0804">Transcription</keyword>
<keyword id="KW-0805">Transcription regulation</keyword>
<name>WRK67_ARATH</name>
<dbReference type="EMBL" id="AF421154">
    <property type="protein sequence ID" value="AAL13043.1"/>
    <property type="molecule type" value="mRNA"/>
</dbReference>
<dbReference type="EMBL" id="AC074025">
    <property type="protein sequence ID" value="AAG51159.1"/>
    <property type="status" value="ALT_SEQ"/>
    <property type="molecule type" value="Genomic_DNA"/>
</dbReference>
<dbReference type="EMBL" id="CP002684">
    <property type="protein sequence ID" value="AEE34524.1"/>
    <property type="molecule type" value="Genomic_DNA"/>
</dbReference>
<dbReference type="PIR" id="C96691">
    <property type="entry name" value="C96691"/>
</dbReference>
<dbReference type="RefSeq" id="NP_001117559.1">
    <property type="nucleotide sequence ID" value="NM_001124087.2"/>
</dbReference>
<dbReference type="RefSeq" id="NP_564877.1">
    <molecule id="Q93WV7-1"/>
    <property type="nucleotide sequence ID" value="NM_105326.1"/>
</dbReference>
<dbReference type="SMR" id="Q93WV7"/>
<dbReference type="STRING" id="3702.Q93WV7"/>
<dbReference type="PaxDb" id="3702-AT1G66550.1"/>
<dbReference type="EnsemblPlants" id="AT1G66550.1">
    <molecule id="Q93WV7-1"/>
    <property type="protein sequence ID" value="AT1G66550.1"/>
    <property type="gene ID" value="AT1G66550"/>
</dbReference>
<dbReference type="GeneID" id="842973"/>
<dbReference type="Gramene" id="AT1G66550.1">
    <molecule id="Q93WV7-1"/>
    <property type="protein sequence ID" value="AT1G66550.1"/>
    <property type="gene ID" value="AT1G66550"/>
</dbReference>
<dbReference type="KEGG" id="ath:AT1G66550"/>
<dbReference type="Araport" id="AT1G66550"/>
<dbReference type="TAIR" id="AT1G66550">
    <property type="gene designation" value="WRKY67"/>
</dbReference>
<dbReference type="HOGENOM" id="CLU_100759_0_0_1"/>
<dbReference type="InParanoid" id="Q93WV7"/>
<dbReference type="OMA" id="MSHGVDK"/>
<dbReference type="PhylomeDB" id="Q93WV7"/>
<dbReference type="PRO" id="PR:Q93WV7"/>
<dbReference type="Proteomes" id="UP000006548">
    <property type="component" value="Chromosome 1"/>
</dbReference>
<dbReference type="ExpressionAtlas" id="Q93WV7">
    <property type="expression patterns" value="baseline and differential"/>
</dbReference>
<dbReference type="GO" id="GO:0005634">
    <property type="term" value="C:nucleus"/>
    <property type="evidence" value="ECO:0007669"/>
    <property type="project" value="UniProtKB-SubCell"/>
</dbReference>
<dbReference type="GO" id="GO:0003700">
    <property type="term" value="F:DNA-binding transcription factor activity"/>
    <property type="evidence" value="ECO:0000250"/>
    <property type="project" value="TAIR"/>
</dbReference>
<dbReference type="GO" id="GO:0043565">
    <property type="term" value="F:sequence-specific DNA binding"/>
    <property type="evidence" value="ECO:0007669"/>
    <property type="project" value="InterPro"/>
</dbReference>
<dbReference type="Gene3D" id="2.20.25.80">
    <property type="entry name" value="WRKY domain"/>
    <property type="match status" value="1"/>
</dbReference>
<dbReference type="InterPro" id="IPR003657">
    <property type="entry name" value="WRKY_dom"/>
</dbReference>
<dbReference type="InterPro" id="IPR036576">
    <property type="entry name" value="WRKY_dom_sf"/>
</dbReference>
<dbReference type="InterPro" id="IPR044810">
    <property type="entry name" value="WRKY_plant"/>
</dbReference>
<dbReference type="PANTHER" id="PTHR31282">
    <property type="entry name" value="WRKY TRANSCRIPTION FACTOR 21-RELATED"/>
    <property type="match status" value="1"/>
</dbReference>
<dbReference type="Pfam" id="PF03106">
    <property type="entry name" value="WRKY"/>
    <property type="match status" value="1"/>
</dbReference>
<dbReference type="SMART" id="SM00774">
    <property type="entry name" value="WRKY"/>
    <property type="match status" value="1"/>
</dbReference>
<dbReference type="SUPFAM" id="SSF118290">
    <property type="entry name" value="WRKY DNA-binding domain"/>
    <property type="match status" value="1"/>
</dbReference>
<dbReference type="PROSITE" id="PS50811">
    <property type="entry name" value="WRKY"/>
    <property type="match status" value="1"/>
</dbReference>
<proteinExistence type="evidence at transcript level"/>
<gene>
    <name type="primary">WRKY67</name>
    <name type="ordered locus">At1g66550</name>
    <name type="ORF">F28G11.3</name>
</gene>
<protein>
    <recommendedName>
        <fullName>Probable WRKY transcription factor 67</fullName>
    </recommendedName>
    <alternativeName>
        <fullName>WRKY DNA-binding protein 67</fullName>
    </alternativeName>
</protein>
<accession>Q93WV7</accession>
<accession>Q9C715</accession>
<reference key="1">
    <citation type="submission" date="2001-09" db="EMBL/GenBank/DDBJ databases">
        <title>Arabidopsis thaliana transcription factor WRKY67.</title>
        <authorList>
            <person name="Ulker B."/>
            <person name="Kushnir S."/>
            <person name="Somssich I.E."/>
        </authorList>
    </citation>
    <scope>NUCLEOTIDE SEQUENCE [MRNA]</scope>
    <source>
        <strain>cv. Columbia</strain>
        <tissue>Flower</tissue>
    </source>
</reference>
<reference key="2">
    <citation type="journal article" date="2000" name="Nature">
        <title>Sequence and analysis of chromosome 1 of the plant Arabidopsis thaliana.</title>
        <authorList>
            <person name="Theologis A."/>
            <person name="Ecker J.R."/>
            <person name="Palm C.J."/>
            <person name="Federspiel N.A."/>
            <person name="Kaul S."/>
            <person name="White O."/>
            <person name="Alonso J."/>
            <person name="Altafi H."/>
            <person name="Araujo R."/>
            <person name="Bowman C.L."/>
            <person name="Brooks S.Y."/>
            <person name="Buehler E."/>
            <person name="Chan A."/>
            <person name="Chao Q."/>
            <person name="Chen H."/>
            <person name="Cheuk R.F."/>
            <person name="Chin C.W."/>
            <person name="Chung M.K."/>
            <person name="Conn L."/>
            <person name="Conway A.B."/>
            <person name="Conway A.R."/>
            <person name="Creasy T.H."/>
            <person name="Dewar K."/>
            <person name="Dunn P."/>
            <person name="Etgu P."/>
            <person name="Feldblyum T.V."/>
            <person name="Feng J.-D."/>
            <person name="Fong B."/>
            <person name="Fujii C.Y."/>
            <person name="Gill J.E."/>
            <person name="Goldsmith A.D."/>
            <person name="Haas B."/>
            <person name="Hansen N.F."/>
            <person name="Hughes B."/>
            <person name="Huizar L."/>
            <person name="Hunter J.L."/>
            <person name="Jenkins J."/>
            <person name="Johnson-Hopson C."/>
            <person name="Khan S."/>
            <person name="Khaykin E."/>
            <person name="Kim C.J."/>
            <person name="Koo H.L."/>
            <person name="Kremenetskaia I."/>
            <person name="Kurtz D.B."/>
            <person name="Kwan A."/>
            <person name="Lam B."/>
            <person name="Langin-Hooper S."/>
            <person name="Lee A."/>
            <person name="Lee J.M."/>
            <person name="Lenz C.A."/>
            <person name="Li J.H."/>
            <person name="Li Y.-P."/>
            <person name="Lin X."/>
            <person name="Liu S.X."/>
            <person name="Liu Z.A."/>
            <person name="Luros J.S."/>
            <person name="Maiti R."/>
            <person name="Marziali A."/>
            <person name="Militscher J."/>
            <person name="Miranda M."/>
            <person name="Nguyen M."/>
            <person name="Nierman W.C."/>
            <person name="Osborne B.I."/>
            <person name="Pai G."/>
            <person name="Peterson J."/>
            <person name="Pham P.K."/>
            <person name="Rizzo M."/>
            <person name="Rooney T."/>
            <person name="Rowley D."/>
            <person name="Sakano H."/>
            <person name="Salzberg S.L."/>
            <person name="Schwartz J.R."/>
            <person name="Shinn P."/>
            <person name="Southwick A.M."/>
            <person name="Sun H."/>
            <person name="Tallon L.J."/>
            <person name="Tambunga G."/>
            <person name="Toriumi M.J."/>
            <person name="Town C.D."/>
            <person name="Utterback T."/>
            <person name="Van Aken S."/>
            <person name="Vaysberg M."/>
            <person name="Vysotskaia V.S."/>
            <person name="Walker M."/>
            <person name="Wu D."/>
            <person name="Yu G."/>
            <person name="Fraser C.M."/>
            <person name="Venter J.C."/>
            <person name="Davis R.W."/>
        </authorList>
    </citation>
    <scope>NUCLEOTIDE SEQUENCE [LARGE SCALE GENOMIC DNA]</scope>
    <source>
        <strain>cv. Columbia</strain>
    </source>
</reference>
<reference key="3">
    <citation type="journal article" date="2017" name="Plant J.">
        <title>Araport11: a complete reannotation of the Arabidopsis thaliana reference genome.</title>
        <authorList>
            <person name="Cheng C.Y."/>
            <person name="Krishnakumar V."/>
            <person name="Chan A.P."/>
            <person name="Thibaud-Nissen F."/>
            <person name="Schobel S."/>
            <person name="Town C.D."/>
        </authorList>
    </citation>
    <scope>GENOME REANNOTATION</scope>
    <source>
        <strain>cv. Columbia</strain>
    </source>
</reference>
<evidence type="ECO:0000250" key="1"/>
<evidence type="ECO:0000255" key="2">
    <source>
        <dbReference type="PROSITE-ProRule" id="PRU00223"/>
    </source>
</evidence>
<evidence type="ECO:0000305" key="3"/>
<comment type="function">
    <text evidence="1">Transcription factor. Interacts specifically with the W box (5'-(T)TGAC[CT]-3'), a frequently occurring elicitor-responsive cis-acting element (By similarity).</text>
</comment>
<comment type="subcellular location">
    <subcellularLocation>
        <location evidence="3">Nucleus</location>
    </subcellularLocation>
</comment>
<comment type="alternative products">
    <event type="alternative splicing"/>
    <isoform>
        <id>Q93WV7-1</id>
        <name>1</name>
        <sequence type="displayed"/>
    </isoform>
    <text>A number of isoforms are produced. According to EST sequences.</text>
</comment>
<comment type="similarity">
    <text evidence="3">Belongs to the WRKY group III family.</text>
</comment>
<comment type="sequence caution" evidence="3">
    <conflict type="erroneous gene model prediction">
        <sequence resource="EMBL-CDS" id="AAG51159"/>
    </conflict>
</comment>
<feature type="chain" id="PRO_0000133708" description="Probable WRKY transcription factor 67">
    <location>
        <begin position="1"/>
        <end position="254"/>
    </location>
</feature>
<feature type="DNA-binding region" description="WRKY" evidence="2">
    <location>
        <begin position="102"/>
        <end position="170"/>
    </location>
</feature>
<organism>
    <name type="scientific">Arabidopsis thaliana</name>
    <name type="common">Mouse-ear cress</name>
    <dbReference type="NCBI Taxonomy" id="3702"/>
    <lineage>
        <taxon>Eukaryota</taxon>
        <taxon>Viridiplantae</taxon>
        <taxon>Streptophyta</taxon>
        <taxon>Embryophyta</taxon>
        <taxon>Tracheophyta</taxon>
        <taxon>Spermatophyta</taxon>
        <taxon>Magnoliopsida</taxon>
        <taxon>eudicotyledons</taxon>
        <taxon>Gunneridae</taxon>
        <taxon>Pentapetalae</taxon>
        <taxon>rosids</taxon>
        <taxon>malvids</taxon>
        <taxon>Brassicales</taxon>
        <taxon>Brassicaceae</taxon>
        <taxon>Camelineae</taxon>
        <taxon>Arabidopsis</taxon>
    </lineage>
</organism>